<keyword id="KW-0274">FAD</keyword>
<keyword id="KW-0285">Flavoprotein</keyword>
<keyword id="KW-0560">Oxidoreductase</keyword>
<keyword id="KW-0816">Tricarboxylic acid cycle</keyword>
<reference key="1">
    <citation type="submission" date="2009-06" db="EMBL/GenBank/DDBJ databases">
        <title>Complete sequence of chromosome of Geopacillus sp. WCH70.</title>
        <authorList>
            <consortium name="US DOE Joint Genome Institute"/>
            <person name="Lucas S."/>
            <person name="Copeland A."/>
            <person name="Lapidus A."/>
            <person name="Glavina del Rio T."/>
            <person name="Dalin E."/>
            <person name="Tice H."/>
            <person name="Bruce D."/>
            <person name="Goodwin L."/>
            <person name="Pitluck S."/>
            <person name="Chertkov O."/>
            <person name="Brettin T."/>
            <person name="Detter J.C."/>
            <person name="Han C."/>
            <person name="Larimer F."/>
            <person name="Land M."/>
            <person name="Hauser L."/>
            <person name="Kyrpides N."/>
            <person name="Mikhailova N."/>
            <person name="Brumm P."/>
            <person name="Mead D.A."/>
            <person name="Richardson P."/>
        </authorList>
    </citation>
    <scope>NUCLEOTIDE SEQUENCE [LARGE SCALE GENOMIC DNA]</scope>
    <source>
        <strain>WCH70</strain>
    </source>
</reference>
<name>MQO_GEOSW</name>
<organism>
    <name type="scientific">Geobacillus sp. (strain WCH70)</name>
    <dbReference type="NCBI Taxonomy" id="471223"/>
    <lineage>
        <taxon>Bacteria</taxon>
        <taxon>Bacillati</taxon>
        <taxon>Bacillota</taxon>
        <taxon>Bacilli</taxon>
        <taxon>Bacillales</taxon>
        <taxon>Anoxybacillaceae</taxon>
        <taxon>Geobacillus</taxon>
    </lineage>
</organism>
<evidence type="ECO:0000255" key="1">
    <source>
        <dbReference type="HAMAP-Rule" id="MF_00212"/>
    </source>
</evidence>
<evidence type="ECO:0000256" key="2">
    <source>
        <dbReference type="SAM" id="MobiDB-lite"/>
    </source>
</evidence>
<proteinExistence type="inferred from homology"/>
<gene>
    <name evidence="1" type="primary">mqo</name>
    <name type="ordered locus">GWCH70_1433</name>
</gene>
<dbReference type="EC" id="1.1.5.4" evidence="1"/>
<dbReference type="EMBL" id="CP001638">
    <property type="protein sequence ID" value="ACS24254.1"/>
    <property type="molecule type" value="Genomic_DNA"/>
</dbReference>
<dbReference type="SMR" id="C5DAE0"/>
<dbReference type="STRING" id="471223.GWCH70_1433"/>
<dbReference type="KEGG" id="gwc:GWCH70_1433"/>
<dbReference type="eggNOG" id="COG0579">
    <property type="taxonomic scope" value="Bacteria"/>
</dbReference>
<dbReference type="HOGENOM" id="CLU_028151_0_0_9"/>
<dbReference type="UniPathway" id="UPA00223">
    <property type="reaction ID" value="UER01008"/>
</dbReference>
<dbReference type="GO" id="GO:0047545">
    <property type="term" value="F:2-hydroxyglutarate dehydrogenase activity"/>
    <property type="evidence" value="ECO:0007669"/>
    <property type="project" value="TreeGrafter"/>
</dbReference>
<dbReference type="GO" id="GO:0008924">
    <property type="term" value="F:L-malate dehydrogenase (quinone) activity"/>
    <property type="evidence" value="ECO:0007669"/>
    <property type="project" value="UniProtKB-UniRule"/>
</dbReference>
<dbReference type="GO" id="GO:0006099">
    <property type="term" value="P:tricarboxylic acid cycle"/>
    <property type="evidence" value="ECO:0007669"/>
    <property type="project" value="UniProtKB-UniRule"/>
</dbReference>
<dbReference type="Gene3D" id="3.30.9.10">
    <property type="entry name" value="D-Amino Acid Oxidase, subunit A, domain 2"/>
    <property type="match status" value="1"/>
</dbReference>
<dbReference type="Gene3D" id="3.50.50.60">
    <property type="entry name" value="FAD/NAD(P)-binding domain"/>
    <property type="match status" value="1"/>
</dbReference>
<dbReference type="HAMAP" id="MF_00212">
    <property type="entry name" value="MQO"/>
    <property type="match status" value="1"/>
</dbReference>
<dbReference type="InterPro" id="IPR036188">
    <property type="entry name" value="FAD/NAD-bd_sf"/>
</dbReference>
<dbReference type="InterPro" id="IPR006231">
    <property type="entry name" value="MQO"/>
</dbReference>
<dbReference type="NCBIfam" id="TIGR01320">
    <property type="entry name" value="mal_quin_oxido"/>
    <property type="match status" value="1"/>
</dbReference>
<dbReference type="NCBIfam" id="NF003603">
    <property type="entry name" value="PRK05257.1-1"/>
    <property type="match status" value="1"/>
</dbReference>
<dbReference type="NCBIfam" id="NF003604">
    <property type="entry name" value="PRK05257.1-3"/>
    <property type="match status" value="1"/>
</dbReference>
<dbReference type="NCBIfam" id="NF003605">
    <property type="entry name" value="PRK05257.1-4"/>
    <property type="match status" value="1"/>
</dbReference>
<dbReference type="NCBIfam" id="NF003606">
    <property type="entry name" value="PRK05257.2-1"/>
    <property type="match status" value="1"/>
</dbReference>
<dbReference type="NCBIfam" id="NF003608">
    <property type="entry name" value="PRK05257.2-4"/>
    <property type="match status" value="1"/>
</dbReference>
<dbReference type="NCBIfam" id="NF003610">
    <property type="entry name" value="PRK05257.3-1"/>
    <property type="match status" value="1"/>
</dbReference>
<dbReference type="NCBIfam" id="NF003611">
    <property type="entry name" value="PRK05257.3-2"/>
    <property type="match status" value="1"/>
</dbReference>
<dbReference type="NCBIfam" id="NF009875">
    <property type="entry name" value="PRK13339.1"/>
    <property type="match status" value="1"/>
</dbReference>
<dbReference type="PANTHER" id="PTHR43104">
    <property type="entry name" value="L-2-HYDROXYGLUTARATE DEHYDROGENASE, MITOCHONDRIAL"/>
    <property type="match status" value="1"/>
</dbReference>
<dbReference type="PANTHER" id="PTHR43104:SF2">
    <property type="entry name" value="L-2-HYDROXYGLUTARATE DEHYDROGENASE, MITOCHONDRIAL"/>
    <property type="match status" value="1"/>
</dbReference>
<dbReference type="Pfam" id="PF06039">
    <property type="entry name" value="Mqo"/>
    <property type="match status" value="1"/>
</dbReference>
<dbReference type="SUPFAM" id="SSF51905">
    <property type="entry name" value="FAD/NAD(P)-binding domain"/>
    <property type="match status" value="1"/>
</dbReference>
<protein>
    <recommendedName>
        <fullName evidence="1">Probable malate:quinone oxidoreductase</fullName>
        <ecNumber evidence="1">1.1.5.4</ecNumber>
    </recommendedName>
    <alternativeName>
        <fullName evidence="1">MQO</fullName>
    </alternativeName>
    <alternativeName>
        <fullName evidence="1">Malate dehydrogenase [quinone]</fullName>
    </alternativeName>
</protein>
<comment type="catalytic activity">
    <reaction evidence="1">
        <text>(S)-malate + a quinone = a quinol + oxaloacetate</text>
        <dbReference type="Rhea" id="RHEA:46012"/>
        <dbReference type="ChEBI" id="CHEBI:15589"/>
        <dbReference type="ChEBI" id="CHEBI:16452"/>
        <dbReference type="ChEBI" id="CHEBI:24646"/>
        <dbReference type="ChEBI" id="CHEBI:132124"/>
        <dbReference type="EC" id="1.1.5.4"/>
    </reaction>
</comment>
<comment type="cofactor">
    <cofactor evidence="1">
        <name>FAD</name>
        <dbReference type="ChEBI" id="CHEBI:57692"/>
    </cofactor>
</comment>
<comment type="pathway">
    <text evidence="1">Carbohydrate metabolism; tricarboxylic acid cycle; oxaloacetate from (S)-malate (quinone route): step 1/1.</text>
</comment>
<comment type="similarity">
    <text evidence="1">Belongs to the MQO family.</text>
</comment>
<sequence length="509" mass="56362">MSNRQTSTDVILIGAGIMSATLGTLLKELAPEWEIKVFEKLGKPGEESSNEWNNAGTGHAALCELNYTPEKPDGSIDISKAIRINEQFQVSKQFWAYLVKNNLLQNPQEFIRPLPHISLVQGENNVRFLKKRFEALSNNPLFQGMEFSDDPEKLKEWMPLIMEGRTSNEPIAATKIDSGTDVNFGALTRMLFDHLKRKGVEINYKHSVKDIKRTSDGLWELKVKDLNSGSVEIHKAKFVFIGAGGGSLHLLQKSGIPEGKHIGGFPVSGLFMVCNNPKVVEKHHAKVYGKAKIGAPPMSVPHLDTRYIDNKKMLLFGPFAGFSPKFLKNGSNMDLFASVKLHNLGTLLASAFKNFSLEKYLIQQLMLTKEKRMEELREFVPTAKSEDWDIVIAGQRVQIIKDTEAGGKGTIQFGTEVVSAADGSIAALLGASPGASTAVHVMLEVLKKCFPQHMKEWEPKIKEMIPSYGVSLAKNPDLFQKLHDSTAETLGLNEKEPVSGASEKELVYS</sequence>
<feature type="chain" id="PRO_1000204200" description="Probable malate:quinone oxidoreductase">
    <location>
        <begin position="1"/>
        <end position="509"/>
    </location>
</feature>
<feature type="region of interest" description="Disordered" evidence="2">
    <location>
        <begin position="490"/>
        <end position="509"/>
    </location>
</feature>
<feature type="compositionally biased region" description="Basic and acidic residues" evidence="2">
    <location>
        <begin position="493"/>
        <end position="509"/>
    </location>
</feature>
<accession>C5DAE0</accession>